<proteinExistence type="inferred from homology"/>
<comment type="similarity">
    <text evidence="1">Belongs to the UPF0352 family.</text>
</comment>
<name>YEJL_ECO45</name>
<evidence type="ECO:0000255" key="1">
    <source>
        <dbReference type="HAMAP-Rule" id="MF_00816"/>
    </source>
</evidence>
<organism>
    <name type="scientific">Escherichia coli O45:K1 (strain S88 / ExPEC)</name>
    <dbReference type="NCBI Taxonomy" id="585035"/>
    <lineage>
        <taxon>Bacteria</taxon>
        <taxon>Pseudomonadati</taxon>
        <taxon>Pseudomonadota</taxon>
        <taxon>Gammaproteobacteria</taxon>
        <taxon>Enterobacterales</taxon>
        <taxon>Enterobacteriaceae</taxon>
        <taxon>Escherichia</taxon>
    </lineage>
</organism>
<sequence>MPQISRYSDEQVEQLLAELLNILEKHKAPTDLSLMVLGNMVTNLINTSIAPAQRQAIANSFARALQSSINEDKAH</sequence>
<dbReference type="EMBL" id="CU928161">
    <property type="protein sequence ID" value="CAR03618.1"/>
    <property type="molecule type" value="Genomic_DNA"/>
</dbReference>
<dbReference type="RefSeq" id="WP_001135664.1">
    <property type="nucleotide sequence ID" value="NC_011742.1"/>
</dbReference>
<dbReference type="SMR" id="B7MFA2"/>
<dbReference type="KEGG" id="ecz:ECS88_2336"/>
<dbReference type="HOGENOM" id="CLU_175457_0_0_6"/>
<dbReference type="Proteomes" id="UP000000747">
    <property type="component" value="Chromosome"/>
</dbReference>
<dbReference type="FunFam" id="1.10.3390.10:FF:000001">
    <property type="entry name" value="UPF0352 protein YejL"/>
    <property type="match status" value="1"/>
</dbReference>
<dbReference type="Gene3D" id="1.10.3390.10">
    <property type="entry name" value="YejL-like"/>
    <property type="match status" value="1"/>
</dbReference>
<dbReference type="HAMAP" id="MF_00816">
    <property type="entry name" value="UPF0352"/>
    <property type="match status" value="1"/>
</dbReference>
<dbReference type="InterPro" id="IPR009857">
    <property type="entry name" value="UPF0352"/>
</dbReference>
<dbReference type="InterPro" id="IPR023202">
    <property type="entry name" value="YejL_sf"/>
</dbReference>
<dbReference type="NCBIfam" id="NF010242">
    <property type="entry name" value="PRK13689.1"/>
    <property type="match status" value="1"/>
</dbReference>
<dbReference type="Pfam" id="PF07208">
    <property type="entry name" value="DUF1414"/>
    <property type="match status" value="1"/>
</dbReference>
<dbReference type="PIRSF" id="PIRSF006188">
    <property type="entry name" value="UCP006188"/>
    <property type="match status" value="1"/>
</dbReference>
<dbReference type="SUPFAM" id="SSF158651">
    <property type="entry name" value="YejL-like"/>
    <property type="match status" value="1"/>
</dbReference>
<reference key="1">
    <citation type="journal article" date="2009" name="PLoS Genet.">
        <title>Organised genome dynamics in the Escherichia coli species results in highly diverse adaptive paths.</title>
        <authorList>
            <person name="Touchon M."/>
            <person name="Hoede C."/>
            <person name="Tenaillon O."/>
            <person name="Barbe V."/>
            <person name="Baeriswyl S."/>
            <person name="Bidet P."/>
            <person name="Bingen E."/>
            <person name="Bonacorsi S."/>
            <person name="Bouchier C."/>
            <person name="Bouvet O."/>
            <person name="Calteau A."/>
            <person name="Chiapello H."/>
            <person name="Clermont O."/>
            <person name="Cruveiller S."/>
            <person name="Danchin A."/>
            <person name="Diard M."/>
            <person name="Dossat C."/>
            <person name="Karoui M.E."/>
            <person name="Frapy E."/>
            <person name="Garry L."/>
            <person name="Ghigo J.M."/>
            <person name="Gilles A.M."/>
            <person name="Johnson J."/>
            <person name="Le Bouguenec C."/>
            <person name="Lescat M."/>
            <person name="Mangenot S."/>
            <person name="Martinez-Jehanne V."/>
            <person name="Matic I."/>
            <person name="Nassif X."/>
            <person name="Oztas S."/>
            <person name="Petit M.A."/>
            <person name="Pichon C."/>
            <person name="Rouy Z."/>
            <person name="Ruf C.S."/>
            <person name="Schneider D."/>
            <person name="Tourret J."/>
            <person name="Vacherie B."/>
            <person name="Vallenet D."/>
            <person name="Medigue C."/>
            <person name="Rocha E.P.C."/>
            <person name="Denamur E."/>
        </authorList>
    </citation>
    <scope>NUCLEOTIDE SEQUENCE [LARGE SCALE GENOMIC DNA]</scope>
    <source>
        <strain>S88 / ExPEC</strain>
    </source>
</reference>
<gene>
    <name evidence="1" type="primary">yejL</name>
    <name type="ordered locus">ECS88_2336</name>
</gene>
<accession>B7MFA2</accession>
<protein>
    <recommendedName>
        <fullName evidence="1">UPF0352 protein YejL</fullName>
    </recommendedName>
</protein>
<keyword id="KW-1185">Reference proteome</keyword>
<feature type="chain" id="PRO_1000199587" description="UPF0352 protein YejL">
    <location>
        <begin position="1"/>
        <end position="75"/>
    </location>
</feature>